<dbReference type="EC" id="1.8.1.4" evidence="3"/>
<dbReference type="EMBL" id="AF539836">
    <property type="protein sequence ID" value="AAN15202.1"/>
    <property type="molecule type" value="mRNA"/>
</dbReference>
<dbReference type="RefSeq" id="NP_001233626.1">
    <property type="nucleotide sequence ID" value="NM_001246697.1"/>
</dbReference>
<dbReference type="SMR" id="Q8CIZ7"/>
<dbReference type="PaxDb" id="10029-NP_001233626.1"/>
<dbReference type="GeneID" id="100689437"/>
<dbReference type="KEGG" id="cge:100689437"/>
<dbReference type="CTD" id="1738"/>
<dbReference type="eggNOG" id="KOG1335">
    <property type="taxonomic scope" value="Eukaryota"/>
</dbReference>
<dbReference type="OrthoDB" id="361797at2759"/>
<dbReference type="Proteomes" id="UP000694386">
    <property type="component" value="Unplaced"/>
</dbReference>
<dbReference type="Proteomes" id="UP001108280">
    <property type="component" value="Chromosome 5"/>
</dbReference>
<dbReference type="GO" id="GO:0001669">
    <property type="term" value="C:acrosomal vesicle"/>
    <property type="evidence" value="ECO:0007669"/>
    <property type="project" value="UniProtKB-SubCell"/>
</dbReference>
<dbReference type="GO" id="GO:0005759">
    <property type="term" value="C:mitochondrial matrix"/>
    <property type="evidence" value="ECO:0007669"/>
    <property type="project" value="UniProtKB-SubCell"/>
</dbReference>
<dbReference type="GO" id="GO:0005739">
    <property type="term" value="C:mitochondrion"/>
    <property type="evidence" value="ECO:0000250"/>
    <property type="project" value="UniProtKB"/>
</dbReference>
<dbReference type="GO" id="GO:0031514">
    <property type="term" value="C:motile cilium"/>
    <property type="evidence" value="ECO:0007669"/>
    <property type="project" value="UniProtKB-SubCell"/>
</dbReference>
<dbReference type="GO" id="GO:0005634">
    <property type="term" value="C:nucleus"/>
    <property type="evidence" value="ECO:0000250"/>
    <property type="project" value="UniProtKB"/>
</dbReference>
<dbReference type="GO" id="GO:0045252">
    <property type="term" value="C:oxoglutarate dehydrogenase complex"/>
    <property type="evidence" value="ECO:0000250"/>
    <property type="project" value="UniProtKB"/>
</dbReference>
<dbReference type="GO" id="GO:0004148">
    <property type="term" value="F:dihydrolipoyl dehydrogenase (NADH) activity"/>
    <property type="evidence" value="ECO:0000250"/>
    <property type="project" value="UniProtKB"/>
</dbReference>
<dbReference type="GO" id="GO:0050660">
    <property type="term" value="F:flavin adenine dinucleotide binding"/>
    <property type="evidence" value="ECO:0007669"/>
    <property type="project" value="InterPro"/>
</dbReference>
<dbReference type="GO" id="GO:0006103">
    <property type="term" value="P:2-oxoglutarate metabolic process"/>
    <property type="evidence" value="ECO:0007669"/>
    <property type="project" value="TreeGrafter"/>
</dbReference>
<dbReference type="FunFam" id="3.30.390.30:FF:000001">
    <property type="entry name" value="Dihydrolipoyl dehydrogenase"/>
    <property type="match status" value="1"/>
</dbReference>
<dbReference type="FunFam" id="3.50.50.60:FF:000025">
    <property type="entry name" value="Dihydrolipoyl dehydrogenase"/>
    <property type="match status" value="1"/>
</dbReference>
<dbReference type="FunFam" id="3.50.50.60:FF:000221">
    <property type="entry name" value="Dihydrolipoyl dehydrogenase, mitochondrial"/>
    <property type="match status" value="1"/>
</dbReference>
<dbReference type="Gene3D" id="3.30.390.30">
    <property type="match status" value="1"/>
</dbReference>
<dbReference type="Gene3D" id="3.50.50.60">
    <property type="entry name" value="FAD/NAD(P)-binding domain"/>
    <property type="match status" value="2"/>
</dbReference>
<dbReference type="InterPro" id="IPR050151">
    <property type="entry name" value="Class-I_Pyr_Nuc-Dis_Oxidored"/>
</dbReference>
<dbReference type="InterPro" id="IPR036188">
    <property type="entry name" value="FAD/NAD-bd_sf"/>
</dbReference>
<dbReference type="InterPro" id="IPR023753">
    <property type="entry name" value="FAD/NAD-binding_dom"/>
</dbReference>
<dbReference type="InterPro" id="IPR016156">
    <property type="entry name" value="FAD/NAD-linked_Rdtase_dimer_sf"/>
</dbReference>
<dbReference type="InterPro" id="IPR006258">
    <property type="entry name" value="Lipoamide_DH"/>
</dbReference>
<dbReference type="InterPro" id="IPR001100">
    <property type="entry name" value="Pyr_nuc-diS_OxRdtase"/>
</dbReference>
<dbReference type="InterPro" id="IPR004099">
    <property type="entry name" value="Pyr_nucl-diS_OxRdtase_dimer"/>
</dbReference>
<dbReference type="InterPro" id="IPR012999">
    <property type="entry name" value="Pyr_OxRdtase_I_AS"/>
</dbReference>
<dbReference type="NCBIfam" id="TIGR01350">
    <property type="entry name" value="lipoamide_DH"/>
    <property type="match status" value="1"/>
</dbReference>
<dbReference type="PANTHER" id="PTHR22912:SF151">
    <property type="entry name" value="DIHYDROLIPOYL DEHYDROGENASE, MITOCHONDRIAL"/>
    <property type="match status" value="1"/>
</dbReference>
<dbReference type="PANTHER" id="PTHR22912">
    <property type="entry name" value="DISULFIDE OXIDOREDUCTASE"/>
    <property type="match status" value="1"/>
</dbReference>
<dbReference type="Pfam" id="PF07992">
    <property type="entry name" value="Pyr_redox_2"/>
    <property type="match status" value="1"/>
</dbReference>
<dbReference type="Pfam" id="PF02852">
    <property type="entry name" value="Pyr_redox_dim"/>
    <property type="match status" value="1"/>
</dbReference>
<dbReference type="PIRSF" id="PIRSF000350">
    <property type="entry name" value="Mercury_reductase_MerA"/>
    <property type="match status" value="1"/>
</dbReference>
<dbReference type="PRINTS" id="PR00368">
    <property type="entry name" value="FADPNR"/>
</dbReference>
<dbReference type="PRINTS" id="PR00411">
    <property type="entry name" value="PNDRDTASEI"/>
</dbReference>
<dbReference type="SUPFAM" id="SSF51905">
    <property type="entry name" value="FAD/NAD(P)-binding domain"/>
    <property type="match status" value="1"/>
</dbReference>
<dbReference type="SUPFAM" id="SSF55424">
    <property type="entry name" value="FAD/NAD-linked reductases, dimerisation (C-terminal) domain"/>
    <property type="match status" value="1"/>
</dbReference>
<dbReference type="PROSITE" id="PS00076">
    <property type="entry name" value="PYRIDINE_REDOX_1"/>
    <property type="match status" value="1"/>
</dbReference>
<evidence type="ECO:0000250" key="1"/>
<evidence type="ECO:0000250" key="2">
    <source>
        <dbReference type="UniProtKB" id="O08749"/>
    </source>
</evidence>
<evidence type="ECO:0000250" key="3">
    <source>
        <dbReference type="UniProtKB" id="P09622"/>
    </source>
</evidence>
<evidence type="ECO:0000250" key="4">
    <source>
        <dbReference type="UniProtKB" id="P09624"/>
    </source>
</evidence>
<evidence type="ECO:0000250" key="5">
    <source>
        <dbReference type="UniProtKB" id="Q6P6R2"/>
    </source>
</evidence>
<evidence type="ECO:0000250" key="6">
    <source>
        <dbReference type="UniProtKB" id="Q811C4"/>
    </source>
</evidence>
<evidence type="ECO:0000305" key="7"/>
<sequence length="509" mass="54131">MQSWSRVYCSLAKRGHFNRISHGLQGVSSVPLRTYADQPIDADVTVIGSGPGGYVAAIKAAQLGFKTVCIEKNDTLGGTCLNVGCIPSKALLNNSHYYHLAHGRDFASRGIELSEVRLNLEKMMEQKSSAVKALIGGIAHLFKQNKVVHVNGFGKITGKNQVTATKADGSSQVIGTKNILIATGSEVTPFPGITIDEDTIVSSTGALSLKKVPEKLVVIGAGVIGVELGSVWQRLGADVTAVEFLGHVGGIGIDMEISKNFQRILQKQGFKFKLNTKVTGATKRSDGKIDVSVEAASGGKAEVITCDVLLVCIGRRPFTQNLGLEELGIELDPRGRIPVNTRFQTKIPNIYAIGDVVAGPMLAHKAEDEGIICVEGMAGGAVHIDYNCVPSVIYTHPEVAWVGKSEEQLKEEGIEYKVGKFPFAANSRAKTNADTDGMVKILGQKSTDRVLGAHILGPGAGEMVNEAALALEYGASCEDIARVCHAHPTLSEAFREANLAASFGKPINF</sequence>
<comment type="function">
    <text evidence="3 6">Lipoamide dehydrogenase is a component of the glycine cleavage system as well as an E3 component of three alpha-ketoacid dehydrogenase complexes (pyruvate-, alpha-ketoglutarate-, and branched-chain amino acid-dehydrogenase complex). The 2-oxoglutarate dehydrogenase complex is mainly active in the mitochondrion. A fraction of the 2-oxoglutarate dehydrogenase complex also localizes in the nucleus and is required for lysine succinylation of histones: associates with KAT2A on chromatin and provides succinyl-CoA to histone succinyltransferase KAT2A. In monomeric form may have additional moonlighting function as serine protease (By similarity). Involved in the hyperactivation of spermatazoa during capacitation and in the spermatazoal acrosome reaction (By similarity).</text>
</comment>
<comment type="catalytic activity">
    <reaction evidence="3">
        <text>N(6)-[(R)-dihydrolipoyl]-L-lysyl-[protein] + NAD(+) = N(6)-[(R)-lipoyl]-L-lysyl-[protein] + NADH + H(+)</text>
        <dbReference type="Rhea" id="RHEA:15045"/>
        <dbReference type="Rhea" id="RHEA-COMP:10474"/>
        <dbReference type="Rhea" id="RHEA-COMP:10475"/>
        <dbReference type="ChEBI" id="CHEBI:15378"/>
        <dbReference type="ChEBI" id="CHEBI:57540"/>
        <dbReference type="ChEBI" id="CHEBI:57945"/>
        <dbReference type="ChEBI" id="CHEBI:83099"/>
        <dbReference type="ChEBI" id="CHEBI:83100"/>
        <dbReference type="EC" id="1.8.1.4"/>
    </reaction>
</comment>
<comment type="cofactor">
    <cofactor evidence="3">
        <name>FAD</name>
        <dbReference type="ChEBI" id="CHEBI:57692"/>
    </cofactor>
    <text evidence="3">Binds 1 FAD per subunit.</text>
</comment>
<comment type="subunit">
    <text evidence="2 3">Homodimer. Part of the multimeric pyruvate dehydrogenase complex that contains multiple copies of pyruvate dehydrogenase (subunits PDHA (PDHA1 or PDHA2) and PDHB, E1), dihydrolipoamide acetyltransferase (DLAT, E2) and lipoamide dehydrogenase (DLD, E3). These subunits are bound to an inner core composed of about 48 DLAT and 12 PDHX molecules (by non covalent bonds). The 2-oxoglutarate dehydrogenase complex is composed of OGDH (2-oxoglutarate dehydrogenase; E1), DLST (dihydrolipoamide succinyltransferase; E2), DLD (dihydrolipoamide dehydrogenase; E3) and the assembly factor KGD4 (By similarity). It contains multiple copies of the three enzymatic components (E1, E2 and E3). In the nucleus, the 2-oxoglutarate dehydrogenase complex associates with KAT2A. Interacts with PDHX.</text>
</comment>
<comment type="subcellular location">
    <subcellularLocation>
        <location evidence="3">Mitochondrion matrix</location>
    </subcellularLocation>
    <subcellularLocation>
        <location evidence="3">Nucleus</location>
    </subcellularLocation>
    <subcellularLocation>
        <location evidence="6">Cell projection</location>
        <location evidence="6">Cilium</location>
        <location evidence="6">Flagellum</location>
    </subcellularLocation>
    <subcellularLocation>
        <location evidence="3">Cytoplasmic vesicle</location>
        <location evidence="3">Secretory vesicle</location>
        <location evidence="3">Acrosome</location>
    </subcellularLocation>
    <text evidence="3">Mainly localizes in the mitochondrion. A small fraction localizes to the nucleus, where the 2-oxoglutarate dehydrogenase complex is required for histone succinylation.</text>
</comment>
<comment type="PTM">
    <text evidence="6">Tyrosine phosphorylated.</text>
</comment>
<comment type="miscellaneous">
    <text evidence="4">The active site is a redox-active disulfide bond.</text>
</comment>
<comment type="similarity">
    <text evidence="7">Belongs to the class-I pyridine nucleotide-disulfide oxidoreductase family.</text>
</comment>
<keyword id="KW-0007">Acetylation</keyword>
<keyword id="KW-0966">Cell projection</keyword>
<keyword id="KW-0969">Cilium</keyword>
<keyword id="KW-0968">Cytoplasmic vesicle</keyword>
<keyword id="KW-1015">Disulfide bond</keyword>
<keyword id="KW-0274">FAD</keyword>
<keyword id="KW-0282">Flagellum</keyword>
<keyword id="KW-0285">Flavoprotein</keyword>
<keyword id="KW-0496">Mitochondrion</keyword>
<keyword id="KW-0520">NAD</keyword>
<keyword id="KW-0539">Nucleus</keyword>
<keyword id="KW-0560">Oxidoreductase</keyword>
<keyword id="KW-0597">Phosphoprotein</keyword>
<keyword id="KW-0676">Redox-active center</keyword>
<keyword id="KW-0809">Transit peptide</keyword>
<reference key="1">
    <citation type="submission" date="2002-08" db="EMBL/GenBank/DDBJ databases">
        <title>2D gel analysis of the proteomic adaptation of a mammalian cell line to oxidative stress reveals changes in the expression of metabolically relevant enzymes.</title>
        <authorList>
            <person name="Keightley J.A."/>
            <person name="Shang L."/>
            <person name="Kinter M."/>
        </authorList>
    </citation>
    <scope>NUCLEOTIDE SEQUENCE [MRNA]</scope>
</reference>
<gene>
    <name type="primary">DLD</name>
</gene>
<protein>
    <recommendedName>
        <fullName>Dihydrolipoyl dehydrogenase, mitochondrial</fullName>
        <ecNumber evidence="3">1.8.1.4</ecNumber>
    </recommendedName>
    <alternativeName>
        <fullName>Dihydrolipoamide dehydrogenase</fullName>
    </alternativeName>
</protein>
<proteinExistence type="evidence at transcript level"/>
<organism>
    <name type="scientific">Cricetulus griseus</name>
    <name type="common">Chinese hamster</name>
    <name type="synonym">Cricetulus barabensis griseus</name>
    <dbReference type="NCBI Taxonomy" id="10029"/>
    <lineage>
        <taxon>Eukaryota</taxon>
        <taxon>Metazoa</taxon>
        <taxon>Chordata</taxon>
        <taxon>Craniata</taxon>
        <taxon>Vertebrata</taxon>
        <taxon>Euteleostomi</taxon>
        <taxon>Mammalia</taxon>
        <taxon>Eutheria</taxon>
        <taxon>Euarchontoglires</taxon>
        <taxon>Glires</taxon>
        <taxon>Rodentia</taxon>
        <taxon>Myomorpha</taxon>
        <taxon>Muroidea</taxon>
        <taxon>Cricetidae</taxon>
        <taxon>Cricetinae</taxon>
        <taxon>Cricetulus</taxon>
    </lineage>
</organism>
<feature type="transit peptide" description="Mitochondrion" evidence="1">
    <location>
        <begin position="1"/>
        <end position="35"/>
    </location>
</feature>
<feature type="chain" id="PRO_0000260226" description="Dihydrolipoyl dehydrogenase, mitochondrial">
    <location>
        <begin position="36"/>
        <end position="509"/>
    </location>
</feature>
<feature type="active site" description="Proton acceptor" evidence="4">
    <location>
        <position position="487"/>
    </location>
</feature>
<feature type="binding site" evidence="3">
    <location>
        <begin position="71"/>
        <end position="80"/>
    </location>
    <ligand>
        <name>FAD</name>
        <dbReference type="ChEBI" id="CHEBI:57692"/>
    </ligand>
</feature>
<feature type="binding site" evidence="3">
    <location>
        <position position="89"/>
    </location>
    <ligand>
        <name>FAD</name>
        <dbReference type="ChEBI" id="CHEBI:57692"/>
    </ligand>
</feature>
<feature type="binding site" evidence="3">
    <location>
        <position position="154"/>
    </location>
    <ligand>
        <name>FAD</name>
        <dbReference type="ChEBI" id="CHEBI:57692"/>
    </ligand>
</feature>
<feature type="binding site" evidence="3">
    <location>
        <begin position="183"/>
        <end position="185"/>
    </location>
    <ligand>
        <name>FAD</name>
        <dbReference type="ChEBI" id="CHEBI:57692"/>
    </ligand>
</feature>
<feature type="binding site" evidence="3">
    <location>
        <begin position="220"/>
        <end position="227"/>
    </location>
    <ligand>
        <name>NAD(+)</name>
        <dbReference type="ChEBI" id="CHEBI:57540"/>
    </ligand>
</feature>
<feature type="binding site" evidence="3">
    <location>
        <position position="243"/>
    </location>
    <ligand>
        <name>NAD(+)</name>
        <dbReference type="ChEBI" id="CHEBI:57540"/>
    </ligand>
</feature>
<feature type="binding site" evidence="3">
    <location>
        <position position="278"/>
    </location>
    <ligand>
        <name>NAD(+)</name>
        <dbReference type="ChEBI" id="CHEBI:57540"/>
    </ligand>
</feature>
<feature type="binding site" evidence="3">
    <location>
        <position position="314"/>
    </location>
    <ligand>
        <name>NAD(+)</name>
        <dbReference type="ChEBI" id="CHEBI:57540"/>
    </ligand>
</feature>
<feature type="binding site" evidence="3">
    <location>
        <position position="355"/>
    </location>
    <ligand>
        <name>FAD</name>
        <dbReference type="ChEBI" id="CHEBI:57692"/>
    </ligand>
</feature>
<feature type="binding site" evidence="3">
    <location>
        <begin position="361"/>
        <end position="364"/>
    </location>
    <ligand>
        <name>FAD</name>
        <dbReference type="ChEBI" id="CHEBI:57692"/>
    </ligand>
</feature>
<feature type="site" description="Important for interaction with PDHX and activity of pyruvate dehydrogenase complex" evidence="3">
    <location>
        <position position="448"/>
    </location>
</feature>
<feature type="site" description="Important for interaction with PDHX and activity of pyruvate dehydrogenase complex" evidence="3">
    <location>
        <position position="473"/>
    </location>
</feature>
<feature type="modified residue" description="N6-acetyllysine; alternate" evidence="2">
    <location>
        <position position="66"/>
    </location>
</feature>
<feature type="modified residue" description="N6-succinyllysine; alternate" evidence="2">
    <location>
        <position position="66"/>
    </location>
</feature>
<feature type="modified residue" description="N6-acetyllysine; alternate" evidence="2">
    <location>
        <position position="122"/>
    </location>
</feature>
<feature type="modified residue" description="N6-succinyllysine; alternate" evidence="2">
    <location>
        <position position="122"/>
    </location>
</feature>
<feature type="modified residue" description="N6-acetyllysine; alternate" evidence="2">
    <location>
        <position position="132"/>
    </location>
</feature>
<feature type="modified residue" description="N6-succinyllysine; alternate" evidence="2">
    <location>
        <position position="132"/>
    </location>
</feature>
<feature type="modified residue" description="N6-acetyllysine; alternate" evidence="3">
    <location>
        <position position="143"/>
    </location>
</feature>
<feature type="modified residue" description="N6-succinyllysine; alternate" evidence="2">
    <location>
        <position position="143"/>
    </location>
</feature>
<feature type="modified residue" description="N6-succinyllysine" evidence="2">
    <location>
        <position position="159"/>
    </location>
</feature>
<feature type="modified residue" description="N6-succinyllysine" evidence="2">
    <location>
        <position position="166"/>
    </location>
</feature>
<feature type="modified residue" description="N6-succinyllysine" evidence="2">
    <location>
        <position position="273"/>
    </location>
</feature>
<feature type="modified residue" description="N6-succinyllysine" evidence="2">
    <location>
        <position position="277"/>
    </location>
</feature>
<feature type="modified residue" description="Phosphoserine" evidence="2">
    <location>
        <position position="285"/>
    </location>
</feature>
<feature type="modified residue" description="Phosphoserine" evidence="5">
    <location>
        <position position="297"/>
    </location>
</feature>
<feature type="modified residue" description="N6-acetyllysine" evidence="2">
    <location>
        <position position="346"/>
    </location>
</feature>
<feature type="modified residue" description="N6-acetyllysine; alternate" evidence="3">
    <location>
        <position position="410"/>
    </location>
</feature>
<feature type="modified residue" description="N6-succinyllysine; alternate" evidence="2">
    <location>
        <position position="410"/>
    </location>
</feature>
<feature type="modified residue" description="N6-acetyllysine" evidence="3">
    <location>
        <position position="417"/>
    </location>
</feature>
<feature type="modified residue" description="N6-acetyllysine" evidence="2">
    <location>
        <position position="420"/>
    </location>
</feature>
<feature type="modified residue" description="N6-succinyllysine" evidence="2">
    <location>
        <position position="430"/>
    </location>
</feature>
<feature type="modified residue" description="Phosphoserine" evidence="3">
    <location>
        <position position="502"/>
    </location>
</feature>
<feature type="modified residue" description="N6-acetyllysine; alternate" evidence="2">
    <location>
        <position position="505"/>
    </location>
</feature>
<feature type="modified residue" description="N6-succinyllysine; alternate" evidence="2">
    <location>
        <position position="505"/>
    </location>
</feature>
<feature type="disulfide bond" description="Redox-active" evidence="4">
    <location>
        <begin position="80"/>
        <end position="85"/>
    </location>
</feature>
<accession>Q8CIZ7</accession>
<name>DLDH_CRIGR</name>